<name>METXA_METPE</name>
<gene>
    <name evidence="1 3" type="primary">metXA</name>
    <name evidence="4" type="ordered locus">Mpal_1207</name>
</gene>
<accession>B8GHE0</accession>
<evidence type="ECO:0000255" key="1">
    <source>
        <dbReference type="HAMAP-Rule" id="MF_00296"/>
    </source>
</evidence>
<evidence type="ECO:0000269" key="2">
    <source>
    </source>
</evidence>
<evidence type="ECO:0000303" key="3">
    <source>
    </source>
</evidence>
<evidence type="ECO:0000312" key="4">
    <source>
        <dbReference type="EMBL" id="ACL16545.1"/>
    </source>
</evidence>
<keyword id="KW-0012">Acyltransferase</keyword>
<keyword id="KW-0028">Amino-acid biosynthesis</keyword>
<keyword id="KW-0129">CBS domain</keyword>
<keyword id="KW-0963">Cytoplasm</keyword>
<keyword id="KW-0486">Methionine biosynthesis</keyword>
<keyword id="KW-1185">Reference proteome</keyword>
<keyword id="KW-0677">Repeat</keyword>
<keyword id="KW-0808">Transferase</keyword>
<sequence length="490" mass="52981">MQRGSVGISTTSTFTLATPLLLESGASLFSVQIAYETYGTLNHDKSNAILVCHALTGDAHAAGHHGDESRPGWWDGVIGPGKAFDTDKYFVICSNVLGGCKGTTGPASQNPDTGKPYGTSFPVVTIRDMVNVQKALIDHLGISQLFAVAGGSMGGMQVLQWMVSYPSMVRKAIAIAATGSSTPQQIAFNEVGRKAITADPAWCGGDYYGKEHPVKGLSLARMVAHITYLSDASMHTKFGRALQDREFRGFDFDTEFQVESYLHHQGTSFTKRFDANSYLYLTKAVDYFDLSVDDSLISGFAPTKATVLIISVTSDWLYPPYQSQEIVSALSANECDVHYCELRSQFGHDAFLIETGQLNYSISRFLDHTLVRDVMNTQVPVISEQSTIAVAARMMITQGVNHLPVLAPDQSLVGIVTSWDIANAVACGYTSLDQIMSSQVITTTGDETIEVAASRMEQHRISALPVIDQAQHVIGLISSDGLSKLIGRGP</sequence>
<dbReference type="EC" id="2.3.1.31" evidence="1 2"/>
<dbReference type="EMBL" id="CP001338">
    <property type="protein sequence ID" value="ACL16545.1"/>
    <property type="molecule type" value="Genomic_DNA"/>
</dbReference>
<dbReference type="RefSeq" id="WP_012617864.1">
    <property type="nucleotide sequence ID" value="NC_011832.1"/>
</dbReference>
<dbReference type="SMR" id="B8GHE0"/>
<dbReference type="STRING" id="521011.Mpal_1207"/>
<dbReference type="ESTHER" id="metpe-metxa">
    <property type="family name" value="Homoserine_transacetylase"/>
</dbReference>
<dbReference type="GeneID" id="7271485"/>
<dbReference type="KEGG" id="mpl:Mpal_1207"/>
<dbReference type="eggNOG" id="arCOG00627">
    <property type="taxonomic scope" value="Archaea"/>
</dbReference>
<dbReference type="HOGENOM" id="CLU_028760_1_1_2"/>
<dbReference type="OrthoDB" id="295172at2157"/>
<dbReference type="UniPathway" id="UPA00051">
    <property type="reaction ID" value="UER00074"/>
</dbReference>
<dbReference type="Proteomes" id="UP000002457">
    <property type="component" value="Chromosome"/>
</dbReference>
<dbReference type="GO" id="GO:0005737">
    <property type="term" value="C:cytoplasm"/>
    <property type="evidence" value="ECO:0007669"/>
    <property type="project" value="UniProtKB-SubCell"/>
</dbReference>
<dbReference type="GO" id="GO:0004414">
    <property type="term" value="F:homoserine O-acetyltransferase activity"/>
    <property type="evidence" value="ECO:0007669"/>
    <property type="project" value="UniProtKB-UniRule"/>
</dbReference>
<dbReference type="GO" id="GO:0009092">
    <property type="term" value="P:homoserine metabolic process"/>
    <property type="evidence" value="ECO:0007669"/>
    <property type="project" value="TreeGrafter"/>
</dbReference>
<dbReference type="GO" id="GO:0009086">
    <property type="term" value="P:methionine biosynthetic process"/>
    <property type="evidence" value="ECO:0007669"/>
    <property type="project" value="UniProtKB-UniRule"/>
</dbReference>
<dbReference type="FunFam" id="1.10.1740.110:FF:000001">
    <property type="entry name" value="Homoserine O-acetyltransferase"/>
    <property type="match status" value="1"/>
</dbReference>
<dbReference type="Gene3D" id="1.10.1740.110">
    <property type="match status" value="1"/>
</dbReference>
<dbReference type="Gene3D" id="3.40.50.1820">
    <property type="entry name" value="alpha/beta hydrolase"/>
    <property type="match status" value="1"/>
</dbReference>
<dbReference type="Gene3D" id="3.10.580.10">
    <property type="entry name" value="CBS-domain"/>
    <property type="match status" value="2"/>
</dbReference>
<dbReference type="HAMAP" id="MF_00296">
    <property type="entry name" value="MetX_acyltransf"/>
    <property type="match status" value="1"/>
</dbReference>
<dbReference type="InterPro" id="IPR000073">
    <property type="entry name" value="AB_hydrolase_1"/>
</dbReference>
<dbReference type="InterPro" id="IPR029058">
    <property type="entry name" value="AB_hydrolase_fold"/>
</dbReference>
<dbReference type="InterPro" id="IPR000644">
    <property type="entry name" value="CBS_dom"/>
</dbReference>
<dbReference type="InterPro" id="IPR046342">
    <property type="entry name" value="CBS_dom_sf"/>
</dbReference>
<dbReference type="InterPro" id="IPR008220">
    <property type="entry name" value="HAT_MetX-like"/>
</dbReference>
<dbReference type="NCBIfam" id="TIGR01392">
    <property type="entry name" value="homoserO_Ac_trn"/>
    <property type="match status" value="1"/>
</dbReference>
<dbReference type="NCBIfam" id="NF001209">
    <property type="entry name" value="PRK00175.1"/>
    <property type="match status" value="1"/>
</dbReference>
<dbReference type="PANTHER" id="PTHR32268">
    <property type="entry name" value="HOMOSERINE O-ACETYLTRANSFERASE"/>
    <property type="match status" value="1"/>
</dbReference>
<dbReference type="PANTHER" id="PTHR32268:SF11">
    <property type="entry name" value="HOMOSERINE O-ACETYLTRANSFERASE"/>
    <property type="match status" value="1"/>
</dbReference>
<dbReference type="Pfam" id="PF00561">
    <property type="entry name" value="Abhydrolase_1"/>
    <property type="match status" value="1"/>
</dbReference>
<dbReference type="Pfam" id="PF00571">
    <property type="entry name" value="CBS"/>
    <property type="match status" value="2"/>
</dbReference>
<dbReference type="SMART" id="SM00116">
    <property type="entry name" value="CBS"/>
    <property type="match status" value="2"/>
</dbReference>
<dbReference type="SUPFAM" id="SSF53474">
    <property type="entry name" value="alpha/beta-Hydrolases"/>
    <property type="match status" value="1"/>
</dbReference>
<dbReference type="SUPFAM" id="SSF54631">
    <property type="entry name" value="CBS-domain pair"/>
    <property type="match status" value="1"/>
</dbReference>
<dbReference type="PROSITE" id="PS51371">
    <property type="entry name" value="CBS"/>
    <property type="match status" value="2"/>
</dbReference>
<comment type="function">
    <text evidence="1 2">Transfers an acetyl group from acetyl-CoA to L-homoserine, forming acetyl-L-homoserine.</text>
</comment>
<comment type="catalytic activity">
    <reaction evidence="1 2">
        <text>L-homoserine + acetyl-CoA = O-acetyl-L-homoserine + CoA</text>
        <dbReference type="Rhea" id="RHEA:13701"/>
        <dbReference type="ChEBI" id="CHEBI:57287"/>
        <dbReference type="ChEBI" id="CHEBI:57288"/>
        <dbReference type="ChEBI" id="CHEBI:57476"/>
        <dbReference type="ChEBI" id="CHEBI:57716"/>
        <dbReference type="EC" id="2.3.1.31"/>
    </reaction>
</comment>
<comment type="pathway">
    <text evidence="1">Amino-acid biosynthesis; L-methionine biosynthesis via de novo pathway; O-acetyl-L-homoserine from L-homoserine: step 1/1.</text>
</comment>
<comment type="subunit">
    <text evidence="1">Homodimer.</text>
</comment>
<comment type="subcellular location">
    <subcellularLocation>
        <location evidence="1">Cytoplasm</location>
    </subcellularLocation>
</comment>
<comment type="similarity">
    <text evidence="1">Belongs to the AB hydrolase superfamily. MetX family.</text>
</comment>
<reference key="1">
    <citation type="journal article" date="2015" name="Genome Announc.">
        <title>Complete Genome Sequence of Methanosphaerula palustris E1-9CT, a Hydrogenotrophic Methanogen Isolated from a Minerotrophic Fen Peatland.</title>
        <authorList>
            <person name="Cadillo-Quiroz H."/>
            <person name="Browne P."/>
            <person name="Kyrpides N."/>
            <person name="Woyke T."/>
            <person name="Goodwin L."/>
            <person name="Detter C."/>
            <person name="Yavitt J.B."/>
            <person name="Zinder S.H."/>
        </authorList>
    </citation>
    <scope>NUCLEOTIDE SEQUENCE [LARGE SCALE GENOMIC DNA]</scope>
    <source>
        <strain>ATCC BAA-1556 / DSM 19958 / E1-9c</strain>
    </source>
</reference>
<reference key="2">
    <citation type="journal article" date="2017" name="Nat. Chem. Biol.">
        <title>Parallel evolution of non-homologous isofunctional enzymes in methionine biosynthesis.</title>
        <authorList>
            <person name="Bastard K."/>
            <person name="Perret A."/>
            <person name="Mariage A."/>
            <person name="Bessonnet T."/>
            <person name="Pinet-Turpault A."/>
            <person name="Petit J.L."/>
            <person name="Darii E."/>
            <person name="Bazire P."/>
            <person name="Vergne-Vaxelaire C."/>
            <person name="Brewee C."/>
            <person name="Debard A."/>
            <person name="Pellouin V."/>
            <person name="Besnard-Gonnet M."/>
            <person name="Artiguenave F."/>
            <person name="Medigue C."/>
            <person name="Vallenet D."/>
            <person name="Danchin A."/>
            <person name="Zaparucha A."/>
            <person name="Weissenbach J."/>
            <person name="Salanoubat M."/>
            <person name="de Berardinis V."/>
        </authorList>
    </citation>
    <scope>FUNCTION</scope>
    <scope>CATALYTIC ACTIVITY</scope>
</reference>
<protein>
    <recommendedName>
        <fullName evidence="1">Homoserine O-acetyltransferase</fullName>
        <shortName evidence="1 3">HAT</shortName>
        <ecNumber evidence="1 2">2.3.1.31</ecNumber>
    </recommendedName>
    <alternativeName>
        <fullName evidence="1">Homoserine transacetylase</fullName>
        <shortName evidence="1">HTA</shortName>
    </alternativeName>
</protein>
<proteinExistence type="evidence at protein level"/>
<feature type="chain" id="PRO_0000440291" description="Homoserine O-acetyltransferase">
    <location>
        <begin position="1"/>
        <end position="490"/>
    </location>
</feature>
<feature type="domain" description="AB hydrolase-1" evidence="1">
    <location>
        <begin position="47"/>
        <end position="353"/>
    </location>
</feature>
<feature type="domain" description="CBS 1" evidence="1">
    <location>
        <begin position="375"/>
        <end position="432"/>
    </location>
</feature>
<feature type="domain" description="CBS 2" evidence="1">
    <location>
        <begin position="436"/>
        <end position="490"/>
    </location>
</feature>
<feature type="active site" description="Nucleophile" evidence="1">
    <location>
        <position position="152"/>
    </location>
</feature>
<feature type="active site" evidence="1">
    <location>
        <position position="315"/>
    </location>
</feature>
<feature type="active site" evidence="1">
    <location>
        <position position="348"/>
    </location>
</feature>
<feature type="binding site" evidence="1">
    <location>
        <position position="221"/>
    </location>
    <ligand>
        <name>substrate</name>
    </ligand>
</feature>
<feature type="binding site" evidence="1">
    <location>
        <position position="349"/>
    </location>
    <ligand>
        <name>substrate</name>
    </ligand>
</feature>
<organism>
    <name type="scientific">Methanosphaerula palustris (strain ATCC BAA-1556 / DSM 19958 / E1-9c)</name>
    <dbReference type="NCBI Taxonomy" id="521011"/>
    <lineage>
        <taxon>Archaea</taxon>
        <taxon>Methanobacteriati</taxon>
        <taxon>Methanobacteriota</taxon>
        <taxon>Stenosarchaea group</taxon>
        <taxon>Methanomicrobia</taxon>
        <taxon>Methanomicrobiales</taxon>
        <taxon>Methanoregulaceae</taxon>
        <taxon>Methanosphaerula</taxon>
    </lineage>
</organism>